<name>LEG1_CONMY</name>
<reference key="1">
    <citation type="journal article" date="1992" name="Biochim. Biophys. Acta">
        <title>The amino-acid sequence of a lectin from conger eel, Conger myriaster, skin mucus.</title>
        <authorList>
            <person name="Muramoto K."/>
            <person name="Kamiya H."/>
        </authorList>
    </citation>
    <scope>PROTEIN SEQUENCE</scope>
    <scope>ACETYLATION AT SER-1</scope>
    <source>
        <tissue>Skin mucus</tissue>
    </source>
</reference>
<reference key="2">
    <citation type="journal article" date="1999" name="Structure">
        <title>High-resolution structure of the conger eel galectin, congerin I, in lactose-liganded and ligand-free forms: emergence of a new structure class by accelerated evolution.</title>
        <authorList>
            <person name="Shirai T."/>
            <person name="Mitsuyama C."/>
            <person name="Niwa Y."/>
            <person name="Matsui Y."/>
            <person name="Hotta H."/>
            <person name="Yamane T."/>
            <person name="Kamiya H."/>
            <person name="Ishii C."/>
            <person name="Ogawa T."/>
            <person name="Muramoto K."/>
        </authorList>
    </citation>
    <scope>X-RAY CRYSTALLOGRAPHY (1.5 ANGSTROMS)</scope>
</reference>
<organism>
    <name type="scientific">Conger myriaster</name>
    <name type="common">Conger eel</name>
    <dbReference type="NCBI Taxonomy" id="7943"/>
    <lineage>
        <taxon>Eukaryota</taxon>
        <taxon>Metazoa</taxon>
        <taxon>Chordata</taxon>
        <taxon>Craniata</taxon>
        <taxon>Vertebrata</taxon>
        <taxon>Euteleostomi</taxon>
        <taxon>Actinopterygii</taxon>
        <taxon>Neopterygii</taxon>
        <taxon>Teleostei</taxon>
        <taxon>Anguilliformes</taxon>
        <taxon>Congridae</taxon>
        <taxon>Conger</taxon>
    </lineage>
</organism>
<feature type="chain" id="PRO_0000076954" description="Congerin-1">
    <location>
        <begin position="1"/>
        <end position="135"/>
    </location>
</feature>
<feature type="domain" description="Galectin" evidence="2">
    <location>
        <begin position="3"/>
        <end position="135"/>
    </location>
</feature>
<feature type="binding site" evidence="1">
    <location>
        <begin position="70"/>
        <end position="76"/>
    </location>
    <ligand>
        <name>a beta-D-galactoside</name>
        <dbReference type="ChEBI" id="CHEBI:28034"/>
    </ligand>
</feature>
<feature type="modified residue" description="N-acetylserine" evidence="3">
    <location>
        <position position="1"/>
    </location>
</feature>
<feature type="strand" evidence="4">
    <location>
        <begin position="16"/>
        <end position="23"/>
    </location>
</feature>
<feature type="strand" evidence="4">
    <location>
        <begin position="29"/>
        <end position="37"/>
    </location>
</feature>
<feature type="strand" evidence="4">
    <location>
        <begin position="40"/>
        <end position="51"/>
    </location>
</feature>
<feature type="strand" evidence="4">
    <location>
        <begin position="54"/>
        <end position="65"/>
    </location>
</feature>
<feature type="helix" evidence="4">
    <location>
        <begin position="66"/>
        <end position="68"/>
    </location>
</feature>
<feature type="strand" evidence="4">
    <location>
        <begin position="74"/>
        <end position="76"/>
    </location>
</feature>
<feature type="strand" evidence="4">
    <location>
        <begin position="86"/>
        <end position="93"/>
    </location>
</feature>
<feature type="strand" evidence="4">
    <location>
        <begin position="95"/>
        <end position="102"/>
    </location>
</feature>
<feature type="strand" evidence="4">
    <location>
        <begin position="107"/>
        <end position="111"/>
    </location>
</feature>
<feature type="strand" evidence="4">
    <location>
        <begin position="121"/>
        <end position="134"/>
    </location>
</feature>
<protein>
    <recommendedName>
        <fullName>Congerin-1</fullName>
    </recommendedName>
    <alternativeName>
        <fullName>Beta-galactoside-binding lectin 1</fullName>
    </alternativeName>
    <alternativeName>
        <fullName>Congerin I</fullName>
    </alternativeName>
</protein>
<comment type="function">
    <text>This protein binds beta-galactoside. Its physiological function is not yet known.</text>
</comment>
<comment type="subunit">
    <text>Homodimer.</text>
</comment>
<dbReference type="PIR" id="S21102">
    <property type="entry name" value="S21102"/>
</dbReference>
<dbReference type="PDB" id="1C1F">
    <property type="method" value="X-ray"/>
    <property type="resolution" value="1.60 A"/>
    <property type="chains" value="A=1-135"/>
</dbReference>
<dbReference type="PDB" id="1C1L">
    <property type="method" value="X-ray"/>
    <property type="resolution" value="1.50 A"/>
    <property type="chains" value="A=1-135"/>
</dbReference>
<dbReference type="PDBsum" id="1C1F"/>
<dbReference type="PDBsum" id="1C1L"/>
<dbReference type="SMR" id="P26788"/>
<dbReference type="UniLectin" id="P26788"/>
<dbReference type="iPTMnet" id="P26788"/>
<dbReference type="EvolutionaryTrace" id="P26788"/>
<dbReference type="GO" id="GO:0030246">
    <property type="term" value="F:carbohydrate binding"/>
    <property type="evidence" value="ECO:0007669"/>
    <property type="project" value="UniProtKB-KW"/>
</dbReference>
<dbReference type="CDD" id="cd00070">
    <property type="entry name" value="GLECT"/>
    <property type="match status" value="1"/>
</dbReference>
<dbReference type="Gene3D" id="2.60.120.200">
    <property type="match status" value="1"/>
</dbReference>
<dbReference type="InterPro" id="IPR013320">
    <property type="entry name" value="ConA-like_dom_sf"/>
</dbReference>
<dbReference type="InterPro" id="IPR044156">
    <property type="entry name" value="Galectin-like"/>
</dbReference>
<dbReference type="InterPro" id="IPR001079">
    <property type="entry name" value="Galectin_CRD"/>
</dbReference>
<dbReference type="PANTHER" id="PTHR11346">
    <property type="entry name" value="GALECTIN"/>
    <property type="match status" value="1"/>
</dbReference>
<dbReference type="PANTHER" id="PTHR11346:SF147">
    <property type="entry name" value="GALECTIN"/>
    <property type="match status" value="1"/>
</dbReference>
<dbReference type="Pfam" id="PF00337">
    <property type="entry name" value="Gal-bind_lectin"/>
    <property type="match status" value="1"/>
</dbReference>
<dbReference type="SMART" id="SM00908">
    <property type="entry name" value="Gal-bind_lectin"/>
    <property type="match status" value="1"/>
</dbReference>
<dbReference type="SMART" id="SM00276">
    <property type="entry name" value="GLECT"/>
    <property type="match status" value="1"/>
</dbReference>
<dbReference type="SUPFAM" id="SSF49899">
    <property type="entry name" value="Concanavalin A-like lectins/glucanases"/>
    <property type="match status" value="1"/>
</dbReference>
<dbReference type="PROSITE" id="PS51304">
    <property type="entry name" value="GALECTIN"/>
    <property type="match status" value="1"/>
</dbReference>
<evidence type="ECO:0000255" key="1"/>
<evidence type="ECO:0000255" key="2">
    <source>
        <dbReference type="PROSITE-ProRule" id="PRU00639"/>
    </source>
</evidence>
<evidence type="ECO:0000269" key="3">
    <source>
    </source>
</evidence>
<evidence type="ECO:0007829" key="4">
    <source>
        <dbReference type="PDB" id="1C1L"/>
    </source>
</evidence>
<keyword id="KW-0002">3D-structure</keyword>
<keyword id="KW-0007">Acetylation</keyword>
<keyword id="KW-0903">Direct protein sequencing</keyword>
<keyword id="KW-0430">Lectin</keyword>
<sequence>SGGLQVKNFDFTVGKFLTVGGFINNSPQRFSVNVGESMNSLSLHLDHRFNYGADQNTIVMNSTLKGDNGWETEQRSTNFTLSAGQYFEITLSYDINKFYIDILDGPNLEFPNRYSKEFLPFLSLAGDARLTLVKE</sequence>
<proteinExistence type="evidence at protein level"/>
<accession>P26788</accession>